<reference evidence="6" key="1">
    <citation type="journal article" date="2005" name="Genome Res.">
        <title>Comparative genome sequencing of Drosophila pseudoobscura: chromosomal, gene, and cis-element evolution.</title>
        <authorList>
            <person name="Richards S."/>
            <person name="Liu Y."/>
            <person name="Bettencourt B.R."/>
            <person name="Hradecky P."/>
            <person name="Letovsky S."/>
            <person name="Nielsen R."/>
            <person name="Thornton K."/>
            <person name="Hubisz M.J."/>
            <person name="Chen R."/>
            <person name="Meisel R.P."/>
            <person name="Couronne O."/>
            <person name="Hua S."/>
            <person name="Smith M.A."/>
            <person name="Zhang P."/>
            <person name="Liu J."/>
            <person name="Bussemaker H.J."/>
            <person name="van Batenburg M.F."/>
            <person name="Howells S.L."/>
            <person name="Scherer S.E."/>
            <person name="Sodergren E."/>
            <person name="Matthews B.B."/>
            <person name="Crosby M.A."/>
            <person name="Schroeder A.J."/>
            <person name="Ortiz-Barrientos D."/>
            <person name="Rives C.M."/>
            <person name="Metzker M.L."/>
            <person name="Muzny D.M."/>
            <person name="Scott G."/>
            <person name="Steffen D."/>
            <person name="Wheeler D.A."/>
            <person name="Worley K.C."/>
            <person name="Havlak P."/>
            <person name="Durbin K.J."/>
            <person name="Egan A."/>
            <person name="Gill R."/>
            <person name="Hume J."/>
            <person name="Morgan M.B."/>
            <person name="Miner G."/>
            <person name="Hamilton C."/>
            <person name="Huang Y."/>
            <person name="Waldron L."/>
            <person name="Verduzco D."/>
            <person name="Clerc-Blankenburg K.P."/>
            <person name="Dubchak I."/>
            <person name="Noor M.A.F."/>
            <person name="Anderson W."/>
            <person name="White K.P."/>
            <person name="Clark A.G."/>
            <person name="Schaeffer S.W."/>
            <person name="Gelbart W.M."/>
            <person name="Weinstock G.M."/>
            <person name="Gibbs R.A."/>
        </authorList>
    </citation>
    <scope>NUCLEOTIDE SEQUENCE [LARGE SCALE GENOMIC DNA]</scope>
    <source>
        <strain>MV2-25 / Tucson 14011-0121.94</strain>
    </source>
</reference>
<comment type="function">
    <text evidence="1">May be an associated component of the ribosome rather than a core structural subunit. May act as a translation initiation factor. Has a role in regulation of cell proliferation in the hematopoietic organs and the imaginal disks of larva (By similarity).</text>
</comment>
<comment type="subunit">
    <text evidence="1">Component of the 40S small ribosomal subunit. Interacts with sta.</text>
</comment>
<comment type="subcellular location">
    <subcellularLocation>
        <location evidence="2">Cytoplasm</location>
        <location evidence="2">Cytosol</location>
    </subcellularLocation>
    <subcellularLocation>
        <location evidence="2">Cytoplasm</location>
    </subcellularLocation>
    <subcellularLocation>
        <location evidence="3">Rough endoplasmic reticulum</location>
    </subcellularLocation>
    <text evidence="2 3">Detected on cytosolic polysomes (By similarity). Detected in ribosomes that are associated with the rough endoplasmic reticulum (By similarity).</text>
</comment>
<comment type="similarity">
    <text evidence="4">Belongs to the eukaryotic ribosomal protein eS21 family.</text>
</comment>
<dbReference type="EMBL" id="CH379061">
    <property type="protein sequence ID" value="EAL33220.2"/>
    <property type="molecule type" value="Genomic_DNA"/>
</dbReference>
<dbReference type="RefSeq" id="XP_001356160.2">
    <property type="nucleotide sequence ID" value="XM_001356124.3"/>
</dbReference>
<dbReference type="SMR" id="Q29KF5"/>
<dbReference type="FunCoup" id="Q29KF5">
    <property type="interactions" value="1440"/>
</dbReference>
<dbReference type="STRING" id="46245.Q29KF5"/>
<dbReference type="EnsemblMetazoa" id="FBtr0288954">
    <property type="protein sequence ID" value="FBpp0287392"/>
    <property type="gene ID" value="FBgn0075576"/>
</dbReference>
<dbReference type="GeneID" id="4816681"/>
<dbReference type="KEGG" id="dpo:4816681"/>
<dbReference type="CTD" id="6227"/>
<dbReference type="eggNOG" id="KOG3486">
    <property type="taxonomic scope" value="Eukaryota"/>
</dbReference>
<dbReference type="HOGENOM" id="CLU_167122_2_0_1"/>
<dbReference type="InParanoid" id="Q29KF5"/>
<dbReference type="OMA" id="GESDACM"/>
<dbReference type="ChiTaRS" id="RpS21">
    <property type="organism name" value="fly"/>
</dbReference>
<dbReference type="Proteomes" id="UP000001819">
    <property type="component" value="Chromosome 4"/>
</dbReference>
<dbReference type="Bgee" id="FBgn0075576">
    <property type="expression patterns" value="Expressed in female reproductive system and 2 other cell types or tissues"/>
</dbReference>
<dbReference type="GO" id="GO:0005829">
    <property type="term" value="C:cytosol"/>
    <property type="evidence" value="ECO:0007669"/>
    <property type="project" value="UniProtKB-SubCell"/>
</dbReference>
<dbReference type="GO" id="GO:1990904">
    <property type="term" value="C:ribonucleoprotein complex"/>
    <property type="evidence" value="ECO:0007669"/>
    <property type="project" value="UniProtKB-KW"/>
</dbReference>
<dbReference type="GO" id="GO:0005840">
    <property type="term" value="C:ribosome"/>
    <property type="evidence" value="ECO:0000250"/>
    <property type="project" value="UniProtKB"/>
</dbReference>
<dbReference type="GO" id="GO:0005791">
    <property type="term" value="C:rough endoplasmic reticulum"/>
    <property type="evidence" value="ECO:0007669"/>
    <property type="project" value="UniProtKB-SubCell"/>
</dbReference>
<dbReference type="GO" id="GO:0043022">
    <property type="term" value="F:ribosome binding"/>
    <property type="evidence" value="ECO:0000250"/>
    <property type="project" value="UniProtKB"/>
</dbReference>
<dbReference type="GO" id="GO:0003735">
    <property type="term" value="F:structural constituent of ribosome"/>
    <property type="evidence" value="ECO:0007669"/>
    <property type="project" value="InterPro"/>
</dbReference>
<dbReference type="GO" id="GO:0042127">
    <property type="term" value="P:regulation of cell population proliferation"/>
    <property type="evidence" value="ECO:0000250"/>
    <property type="project" value="UniProtKB"/>
</dbReference>
<dbReference type="GO" id="GO:0006417">
    <property type="term" value="P:regulation of translation"/>
    <property type="evidence" value="ECO:0007669"/>
    <property type="project" value="UniProtKB-KW"/>
</dbReference>
<dbReference type="GO" id="GO:0006364">
    <property type="term" value="P:rRNA processing"/>
    <property type="evidence" value="ECO:0007669"/>
    <property type="project" value="UniProtKB-KW"/>
</dbReference>
<dbReference type="GO" id="GO:0006412">
    <property type="term" value="P:translation"/>
    <property type="evidence" value="ECO:0007669"/>
    <property type="project" value="InterPro"/>
</dbReference>
<dbReference type="FunFam" id="3.30.1230.20:FF:000001">
    <property type="entry name" value="40S ribosomal protein S21"/>
    <property type="match status" value="1"/>
</dbReference>
<dbReference type="Gene3D" id="3.30.1230.20">
    <property type="match status" value="1"/>
</dbReference>
<dbReference type="InterPro" id="IPR001931">
    <property type="entry name" value="Ribosomal_eS21"/>
</dbReference>
<dbReference type="InterPro" id="IPR018279">
    <property type="entry name" value="Ribosomal_eS21_CS"/>
</dbReference>
<dbReference type="InterPro" id="IPR038579">
    <property type="entry name" value="Ribosomal_eS21_sf"/>
</dbReference>
<dbReference type="PANTHER" id="PTHR10442">
    <property type="entry name" value="40S RIBOSOMAL PROTEIN S21"/>
    <property type="match status" value="1"/>
</dbReference>
<dbReference type="Pfam" id="PF01249">
    <property type="entry name" value="Ribosomal_S21e"/>
    <property type="match status" value="1"/>
</dbReference>
<dbReference type="PIRSF" id="PIRSF002148">
    <property type="entry name" value="Ribosomal_S21e"/>
    <property type="match status" value="1"/>
</dbReference>
<dbReference type="PROSITE" id="PS00996">
    <property type="entry name" value="RIBOSOMAL_S21E"/>
    <property type="match status" value="1"/>
</dbReference>
<evidence type="ECO:0000250" key="1">
    <source>
        <dbReference type="UniProtKB" id="O76927"/>
    </source>
</evidence>
<evidence type="ECO:0000250" key="2">
    <source>
        <dbReference type="UniProtKB" id="P63220"/>
    </source>
</evidence>
<evidence type="ECO:0000250" key="3">
    <source>
        <dbReference type="UniProtKB" id="P63221"/>
    </source>
</evidence>
<evidence type="ECO:0000255" key="4"/>
<evidence type="ECO:0000305" key="5"/>
<evidence type="ECO:0000312" key="6">
    <source>
        <dbReference type="EMBL" id="EAL33220.2"/>
    </source>
</evidence>
<organism>
    <name type="scientific">Drosophila pseudoobscura pseudoobscura</name>
    <name type="common">Fruit fly</name>
    <dbReference type="NCBI Taxonomy" id="46245"/>
    <lineage>
        <taxon>Eukaryota</taxon>
        <taxon>Metazoa</taxon>
        <taxon>Ecdysozoa</taxon>
        <taxon>Arthropoda</taxon>
        <taxon>Hexapoda</taxon>
        <taxon>Insecta</taxon>
        <taxon>Pterygota</taxon>
        <taxon>Neoptera</taxon>
        <taxon>Endopterygota</taxon>
        <taxon>Diptera</taxon>
        <taxon>Brachycera</taxon>
        <taxon>Muscomorpha</taxon>
        <taxon>Ephydroidea</taxon>
        <taxon>Drosophilidae</taxon>
        <taxon>Drosophila</taxon>
        <taxon>Sophophora</taxon>
    </lineage>
</organism>
<accession>Q29KF5</accession>
<gene>
    <name type="primary">RpS21</name>
    <name type="synonym">oho23B</name>
    <name type="ORF">GA15559</name>
</gene>
<sequence>MENDAGENVDLYVPRKCSASNRIIHAKDHASVQLSIVDVDPETGRQTDGSKTYAICGEIRRMGESDDCIVRLAKKDGLITKNF</sequence>
<name>RS21_DROPS</name>
<keyword id="KW-0963">Cytoplasm</keyword>
<keyword id="KW-0217">Developmental protein</keyword>
<keyword id="KW-0256">Endoplasmic reticulum</keyword>
<keyword id="KW-1185">Reference proteome</keyword>
<keyword id="KW-0687">Ribonucleoprotein</keyword>
<keyword id="KW-0689">Ribosomal protein</keyword>
<keyword id="KW-0698">rRNA processing</keyword>
<keyword id="KW-0810">Translation regulation</keyword>
<feature type="chain" id="PRO_0000395421" description="Small ribosomal subunit protein eS21">
    <location>
        <begin position="1"/>
        <end position="83"/>
    </location>
</feature>
<protein>
    <recommendedName>
        <fullName evidence="5">Small ribosomal subunit protein eS21</fullName>
    </recommendedName>
    <alternativeName>
        <fullName evidence="1">40S ribosomal protein S21</fullName>
    </alternativeName>
    <alternativeName>
        <fullName evidence="1">Overgrown hematopoietic organs at 23B</fullName>
    </alternativeName>
</protein>
<proteinExistence type="inferred from homology"/>